<comment type="function">
    <text evidence="1">Catalyzes the transfer of a ribosyl phosphate group from 5-phosphoribose 1-diphosphate to orotate, leading to the formation of orotidine monophosphate (OMP).</text>
</comment>
<comment type="catalytic activity">
    <reaction evidence="1">
        <text>orotidine 5'-phosphate + diphosphate = orotate + 5-phospho-alpha-D-ribose 1-diphosphate</text>
        <dbReference type="Rhea" id="RHEA:10380"/>
        <dbReference type="ChEBI" id="CHEBI:30839"/>
        <dbReference type="ChEBI" id="CHEBI:33019"/>
        <dbReference type="ChEBI" id="CHEBI:57538"/>
        <dbReference type="ChEBI" id="CHEBI:58017"/>
        <dbReference type="EC" id="2.4.2.10"/>
    </reaction>
</comment>
<comment type="cofactor">
    <cofactor evidence="1">
        <name>Mg(2+)</name>
        <dbReference type="ChEBI" id="CHEBI:18420"/>
    </cofactor>
</comment>
<comment type="pathway">
    <text evidence="1">Pyrimidine metabolism; UMP biosynthesis via de novo pathway; UMP from orotate: step 1/2.</text>
</comment>
<comment type="subunit">
    <text evidence="1">Homodimer.</text>
</comment>
<comment type="similarity">
    <text evidence="1">Belongs to the purine/pyrimidine phosphoribosyltransferase family. PyrE subfamily.</text>
</comment>
<protein>
    <recommendedName>
        <fullName evidence="1">Orotate phosphoribosyltransferase</fullName>
        <shortName evidence="1">OPRT</shortName>
        <shortName evidence="1">OPRTase</shortName>
        <ecNumber evidence="1">2.4.2.10</ecNumber>
    </recommendedName>
</protein>
<sequence>MNTDDVLAVFREAGAILEGHFILTSGLRSPVFLQKARVFMHADKTEKLCKALAEKIRAADLGPIDYVVGPAIGGLIPSYETSRHLGVPSVWVERENGVFRLRRFDVPKGARVVIVEDIVTTGLSIRETIDCMKDLGIEVVAAACIVDRSAGKADVGTRLISLAEYEVPAYPADKLPPELAAIPAVKPGSRNI</sequence>
<evidence type="ECO:0000255" key="1">
    <source>
        <dbReference type="HAMAP-Rule" id="MF_01208"/>
    </source>
</evidence>
<reference key="1">
    <citation type="journal article" date="2009" name="PLoS ONE">
        <title>Genome degradation in Brucella ovis corresponds with narrowing of its host range and tissue tropism.</title>
        <authorList>
            <person name="Tsolis R.M."/>
            <person name="Seshadri R."/>
            <person name="Santos R.L."/>
            <person name="Sangari F.J."/>
            <person name="Lobo J.M."/>
            <person name="de Jong M.F."/>
            <person name="Ren Q."/>
            <person name="Myers G."/>
            <person name="Brinkac L.M."/>
            <person name="Nelson W.C."/>
            <person name="Deboy R.T."/>
            <person name="Angiuoli S."/>
            <person name="Khouri H."/>
            <person name="Dimitrov G."/>
            <person name="Robinson J.R."/>
            <person name="Mulligan S."/>
            <person name="Walker R.L."/>
            <person name="Elzer P.E."/>
            <person name="Hassan K.A."/>
            <person name="Paulsen I.T."/>
        </authorList>
    </citation>
    <scope>NUCLEOTIDE SEQUENCE [LARGE SCALE GENOMIC DNA]</scope>
    <source>
        <strain>ATCC 25840 / 63/290 / NCTC 10512</strain>
    </source>
</reference>
<organism>
    <name type="scientific">Brucella ovis (strain ATCC 25840 / 63/290 / NCTC 10512)</name>
    <dbReference type="NCBI Taxonomy" id="444178"/>
    <lineage>
        <taxon>Bacteria</taxon>
        <taxon>Pseudomonadati</taxon>
        <taxon>Pseudomonadota</taxon>
        <taxon>Alphaproteobacteria</taxon>
        <taxon>Hyphomicrobiales</taxon>
        <taxon>Brucellaceae</taxon>
        <taxon>Brucella/Ochrobactrum group</taxon>
        <taxon>Brucella</taxon>
    </lineage>
</organism>
<dbReference type="EC" id="2.4.2.10" evidence="1"/>
<dbReference type="EMBL" id="CP000708">
    <property type="protein sequence ID" value="ABQ60288.1"/>
    <property type="molecule type" value="Genomic_DNA"/>
</dbReference>
<dbReference type="RefSeq" id="WP_002963797.1">
    <property type="nucleotide sequence ID" value="NC_009505.1"/>
</dbReference>
<dbReference type="SMR" id="A5VPJ0"/>
<dbReference type="GeneID" id="97534018"/>
<dbReference type="KEGG" id="bov:BOV_0646"/>
<dbReference type="HOGENOM" id="CLU_074878_3_0_5"/>
<dbReference type="PhylomeDB" id="A5VPJ0"/>
<dbReference type="UniPathway" id="UPA00070">
    <property type="reaction ID" value="UER00119"/>
</dbReference>
<dbReference type="Proteomes" id="UP000006383">
    <property type="component" value="Chromosome I"/>
</dbReference>
<dbReference type="GO" id="GO:0000287">
    <property type="term" value="F:magnesium ion binding"/>
    <property type="evidence" value="ECO:0007669"/>
    <property type="project" value="UniProtKB-UniRule"/>
</dbReference>
<dbReference type="GO" id="GO:0004588">
    <property type="term" value="F:orotate phosphoribosyltransferase activity"/>
    <property type="evidence" value="ECO:0007669"/>
    <property type="project" value="UniProtKB-UniRule"/>
</dbReference>
<dbReference type="GO" id="GO:0044205">
    <property type="term" value="P:'de novo' UMP biosynthetic process"/>
    <property type="evidence" value="ECO:0007669"/>
    <property type="project" value="UniProtKB-UniRule"/>
</dbReference>
<dbReference type="GO" id="GO:0019856">
    <property type="term" value="P:pyrimidine nucleobase biosynthetic process"/>
    <property type="evidence" value="ECO:0007669"/>
    <property type="project" value="InterPro"/>
</dbReference>
<dbReference type="CDD" id="cd06223">
    <property type="entry name" value="PRTases_typeI"/>
    <property type="match status" value="1"/>
</dbReference>
<dbReference type="Gene3D" id="3.40.50.2020">
    <property type="match status" value="1"/>
</dbReference>
<dbReference type="HAMAP" id="MF_01208">
    <property type="entry name" value="PyrE"/>
    <property type="match status" value="1"/>
</dbReference>
<dbReference type="InterPro" id="IPR023031">
    <property type="entry name" value="OPRT"/>
</dbReference>
<dbReference type="InterPro" id="IPR006273">
    <property type="entry name" value="Orotate_PRibTrfase_bac"/>
</dbReference>
<dbReference type="InterPro" id="IPR000836">
    <property type="entry name" value="PRibTrfase_dom"/>
</dbReference>
<dbReference type="InterPro" id="IPR029057">
    <property type="entry name" value="PRTase-like"/>
</dbReference>
<dbReference type="NCBIfam" id="TIGR01367">
    <property type="entry name" value="pyrE_Therm"/>
    <property type="match status" value="1"/>
</dbReference>
<dbReference type="PANTHER" id="PTHR19278">
    <property type="entry name" value="OROTATE PHOSPHORIBOSYLTRANSFERASE"/>
    <property type="match status" value="1"/>
</dbReference>
<dbReference type="PANTHER" id="PTHR19278:SF9">
    <property type="entry name" value="URIDINE 5'-MONOPHOSPHATE SYNTHASE"/>
    <property type="match status" value="1"/>
</dbReference>
<dbReference type="Pfam" id="PF00156">
    <property type="entry name" value="Pribosyltran"/>
    <property type="match status" value="1"/>
</dbReference>
<dbReference type="SUPFAM" id="SSF53271">
    <property type="entry name" value="PRTase-like"/>
    <property type="match status" value="1"/>
</dbReference>
<dbReference type="PROSITE" id="PS00103">
    <property type="entry name" value="PUR_PYR_PR_TRANSFER"/>
    <property type="match status" value="1"/>
</dbReference>
<proteinExistence type="inferred from homology"/>
<feature type="chain" id="PRO_1000066215" description="Orotate phosphoribosyltransferase">
    <location>
        <begin position="1"/>
        <end position="192"/>
    </location>
</feature>
<feature type="binding site" evidence="1">
    <location>
        <begin position="116"/>
        <end position="124"/>
    </location>
    <ligand>
        <name>5-phospho-alpha-D-ribose 1-diphosphate</name>
        <dbReference type="ChEBI" id="CHEBI:58017"/>
    </ligand>
</feature>
<feature type="binding site" evidence="1">
    <location>
        <position position="120"/>
    </location>
    <ligand>
        <name>orotate</name>
        <dbReference type="ChEBI" id="CHEBI:30839"/>
    </ligand>
</feature>
<feature type="binding site" evidence="1">
    <location>
        <position position="148"/>
    </location>
    <ligand>
        <name>orotate</name>
        <dbReference type="ChEBI" id="CHEBI:30839"/>
    </ligand>
</feature>
<accession>A5VPJ0</accession>
<gene>
    <name evidence="1" type="primary">pyrE</name>
    <name type="ordered locus">BOV_0646</name>
</gene>
<name>PYRE_BRUO2</name>
<keyword id="KW-0328">Glycosyltransferase</keyword>
<keyword id="KW-0460">Magnesium</keyword>
<keyword id="KW-0665">Pyrimidine biosynthesis</keyword>
<keyword id="KW-0808">Transferase</keyword>